<proteinExistence type="inferred from homology"/>
<organism>
    <name type="scientific">Vibrio parahaemolyticus serotype O3:K6 (strain RIMD 2210633)</name>
    <dbReference type="NCBI Taxonomy" id="223926"/>
    <lineage>
        <taxon>Bacteria</taxon>
        <taxon>Pseudomonadati</taxon>
        <taxon>Pseudomonadota</taxon>
        <taxon>Gammaproteobacteria</taxon>
        <taxon>Vibrionales</taxon>
        <taxon>Vibrionaceae</taxon>
        <taxon>Vibrio</taxon>
    </lineage>
</organism>
<sequence>MAVTVSTNVSAMTAQRYLNKATNELNTSMERLSSGHKINSAKDDAAGLQISNRLTAQSRGLDVAMRNANDGISIAQTAEGAMNEATSVMQRMRDLAIQSSNGTNSPAERQAINEESMALVDELNRIAETTSFGGRRLLNGSFGEAAFQIGASSGEAMIMGLTSIRADDTRMGGVTFFSEVGKGKDWGVDPTKADLKITLPGMGEDEDGNVDDLEININAKAGDDIEELATYINGQSDMINASVSEDGKLQIFVAHPNVQGDISISGGLASELGLSDEPVRTSVQDIDMTTVQGSQNAISVLDSALKYVDSQRADLGAKQNRLSHSINNLANIQENVDASNSRIKDTDFAKETTQMTKAQILQQAGTSILAQAKQLPNSAMSLLQ</sequence>
<evidence type="ECO:0000255" key="1"/>
<evidence type="ECO:0000305" key="2"/>
<comment type="function">
    <text>Flagellin is the subunit protein which polymerizes to form the filaments of bacterial flagella. FlaC is not essential for polar flagellar synthesis and swimming motility. Homomer of FlaC is not able to form a functional filament.</text>
</comment>
<comment type="subunit">
    <text>Heteromer of multiple flagellin subunits including FlaA, FlaB/D, FlaC, FlaE and FlaF. Homomer of FlaC is not able to form a functional filament.</text>
</comment>
<comment type="subcellular location">
    <subcellularLocation>
        <location>Secreted</location>
    </subcellularLocation>
    <subcellularLocation>
        <location>Bacterial flagellum</location>
    </subcellularLocation>
</comment>
<comment type="miscellaneous">
    <text>V.parahaemolyticus possesses two flagellar systems: a single polar flagellum propels the bacterium in liquid (swimming), while multiple lateral (peritrichous) flagella move the bacterium over surfaces (swarming). The polar flagellum is synthesized constitutively but lateral flagella are produced only under conditions in which the polar flagellum is not functional.</text>
</comment>
<comment type="similarity">
    <text evidence="2">Belongs to the bacterial flagellin family.</text>
</comment>
<reference key="1">
    <citation type="journal article" date="1995" name="J. Bacteriol.">
        <title>Genetic and molecular characterization of the polar flagellum of Vibrio parahaemolyticus.</title>
        <authorList>
            <person name="McCarter L.L."/>
        </authorList>
    </citation>
    <scope>NUCLEOTIDE SEQUENCE [GENOMIC DNA]</scope>
    <source>
        <strain>BB22</strain>
    </source>
</reference>
<reference key="2">
    <citation type="journal article" date="2003" name="Lancet">
        <title>Genome sequence of Vibrio parahaemolyticus: a pathogenic mechanism distinct from that of V. cholerae.</title>
        <authorList>
            <person name="Makino K."/>
            <person name="Oshima K."/>
            <person name="Kurokawa K."/>
            <person name="Yokoyama K."/>
            <person name="Uda T."/>
            <person name="Tagomori K."/>
            <person name="Iijima Y."/>
            <person name="Najima M."/>
            <person name="Nakano M."/>
            <person name="Yamashita A."/>
            <person name="Kubota Y."/>
            <person name="Kimura S."/>
            <person name="Yasunaga T."/>
            <person name="Honda T."/>
            <person name="Shinagawa H."/>
            <person name="Hattori M."/>
            <person name="Iida T."/>
        </authorList>
    </citation>
    <scope>NUCLEOTIDE SEQUENCE [LARGE SCALE GENOMIC DNA]</scope>
    <source>
        <strain>RIMD 2210633</strain>
    </source>
</reference>
<dbReference type="EMBL" id="U12817">
    <property type="protein sequence ID" value="AAD10271.1"/>
    <property type="molecule type" value="Genomic_DNA"/>
</dbReference>
<dbReference type="EMBL" id="BA000031">
    <property type="protein sequence ID" value="BAC59051.1"/>
    <property type="molecule type" value="Genomic_DNA"/>
</dbReference>
<dbReference type="RefSeq" id="NP_797167.1">
    <property type="nucleotide sequence ID" value="NC_004603.1"/>
</dbReference>
<dbReference type="RefSeq" id="WP_005462278.1">
    <property type="nucleotide sequence ID" value="NC_004603.1"/>
</dbReference>
<dbReference type="SMR" id="Q56712"/>
<dbReference type="GeneID" id="1188285"/>
<dbReference type="KEGG" id="vpa:VP0788"/>
<dbReference type="PATRIC" id="fig|223926.6.peg.752"/>
<dbReference type="eggNOG" id="COG1344">
    <property type="taxonomic scope" value="Bacteria"/>
</dbReference>
<dbReference type="HOGENOM" id="CLU_011142_7_1_6"/>
<dbReference type="Proteomes" id="UP000002493">
    <property type="component" value="Chromosome 1"/>
</dbReference>
<dbReference type="GO" id="GO:0009288">
    <property type="term" value="C:bacterial-type flagellum"/>
    <property type="evidence" value="ECO:0007669"/>
    <property type="project" value="UniProtKB-SubCell"/>
</dbReference>
<dbReference type="GO" id="GO:0005576">
    <property type="term" value="C:extracellular region"/>
    <property type="evidence" value="ECO:0007669"/>
    <property type="project" value="UniProtKB-SubCell"/>
</dbReference>
<dbReference type="GO" id="GO:0005198">
    <property type="term" value="F:structural molecule activity"/>
    <property type="evidence" value="ECO:0007669"/>
    <property type="project" value="InterPro"/>
</dbReference>
<dbReference type="Gene3D" id="2.60.40.4390">
    <property type="match status" value="1"/>
</dbReference>
<dbReference type="Gene3D" id="6.10.280.190">
    <property type="match status" value="1"/>
</dbReference>
<dbReference type="Gene3D" id="1.20.1330.10">
    <property type="entry name" value="f41 fragment of flagellin, N-terminal domain"/>
    <property type="match status" value="1"/>
</dbReference>
<dbReference type="Gene3D" id="6.10.10.10">
    <property type="entry name" value="Flagellar export chaperone, C-terminal domain"/>
    <property type="match status" value="1"/>
</dbReference>
<dbReference type="InterPro" id="IPR001492">
    <property type="entry name" value="Flagellin"/>
</dbReference>
<dbReference type="InterPro" id="IPR046358">
    <property type="entry name" value="Flagellin_C"/>
</dbReference>
<dbReference type="InterPro" id="IPR042187">
    <property type="entry name" value="Flagellin_C_sub2"/>
</dbReference>
<dbReference type="InterPro" id="IPR010810">
    <property type="entry name" value="Flagellin_hook_IN_motif"/>
</dbReference>
<dbReference type="InterPro" id="IPR001029">
    <property type="entry name" value="Flagellin_N"/>
</dbReference>
<dbReference type="NCBIfam" id="NF006466">
    <property type="entry name" value="PRK08869.1-1"/>
    <property type="match status" value="1"/>
</dbReference>
<dbReference type="NCBIfam" id="NF006468">
    <property type="entry name" value="PRK08869.1-3"/>
    <property type="match status" value="1"/>
</dbReference>
<dbReference type="PANTHER" id="PTHR42792">
    <property type="entry name" value="FLAGELLIN"/>
    <property type="match status" value="1"/>
</dbReference>
<dbReference type="PANTHER" id="PTHR42792:SF2">
    <property type="entry name" value="FLAGELLIN"/>
    <property type="match status" value="1"/>
</dbReference>
<dbReference type="Pfam" id="PF00700">
    <property type="entry name" value="Flagellin_C"/>
    <property type="match status" value="1"/>
</dbReference>
<dbReference type="Pfam" id="PF07196">
    <property type="entry name" value="Flagellin_IN"/>
    <property type="match status" value="1"/>
</dbReference>
<dbReference type="Pfam" id="PF00669">
    <property type="entry name" value="Flagellin_N"/>
    <property type="match status" value="1"/>
</dbReference>
<dbReference type="PRINTS" id="PR00207">
    <property type="entry name" value="FLAGELLIN"/>
</dbReference>
<dbReference type="SUPFAM" id="SSF64518">
    <property type="entry name" value="Phase 1 flagellin"/>
    <property type="match status" value="1"/>
</dbReference>
<keyword id="KW-0975">Bacterial flagellum</keyword>
<keyword id="KW-0175">Coiled coil</keyword>
<keyword id="KW-0964">Secreted</keyword>
<protein>
    <recommendedName>
        <fullName>Polar flagellin C</fullName>
    </recommendedName>
</protein>
<gene>
    <name type="primary">flaC</name>
    <name type="ordered locus">VP0788</name>
</gene>
<name>FLAC_VIBPA</name>
<accession>Q56712</accession>
<feature type="chain" id="PRO_0000182655" description="Polar flagellin C">
    <location>
        <begin position="1"/>
        <end position="384"/>
    </location>
</feature>
<feature type="coiled-coil region" evidence="1">
    <location>
        <begin position="317"/>
        <end position="347"/>
    </location>
</feature>
<feature type="sequence conflict" description="In Ref. 1; AAD10271." evidence="2" ref="1">
    <original>E</original>
    <variation>Q</variation>
    <location>
        <position position="277"/>
    </location>
</feature>